<name>TRMD_NITEU</name>
<sequence>MPFEFDVITLLPDMFDAVTQHGVTGRAHKSNLYRLHTWNPRNYAMNHYRTVDDSPYGGGPGMVMMAEPLDKAITDAKARQGEDGVSKTRVIYLSPQGKRLDHKKVLQISQLDGVVLLCGRYEGIDERLIEDQVDEEISIGDYVISGGELAAMVLIDAVVRQLPGALGDTRSAGQDSHTDHLLEYPHYTRPEVHKEKPVPRILLSGDHAKIERWRLQQSIGRTWLKRPDLLAEKYPEGLPDREKELLEEFKQLRYRVVANQLMDNTKEQEQ</sequence>
<reference key="1">
    <citation type="journal article" date="2003" name="J. Bacteriol.">
        <title>Complete genome sequence of the ammonia-oxidizing bacterium and obligate chemolithoautotroph Nitrosomonas europaea.</title>
        <authorList>
            <person name="Chain P."/>
            <person name="Lamerdin J.E."/>
            <person name="Larimer F.W."/>
            <person name="Regala W."/>
            <person name="Lao V."/>
            <person name="Land M.L."/>
            <person name="Hauser L."/>
            <person name="Hooper A.B."/>
            <person name="Klotz M.G."/>
            <person name="Norton J."/>
            <person name="Sayavedra-Soto L.A."/>
            <person name="Arciero D.M."/>
            <person name="Hommes N.G."/>
            <person name="Whittaker M.M."/>
            <person name="Arp D.J."/>
        </authorList>
    </citation>
    <scope>NUCLEOTIDE SEQUENCE [LARGE SCALE GENOMIC DNA]</scope>
    <source>
        <strain>ATCC 19718 / CIP 103999 / KCTC 2705 / NBRC 14298</strain>
    </source>
</reference>
<feature type="chain" id="PRO_0000060422" description="tRNA (guanine-N(1)-)-methyltransferase">
    <location>
        <begin position="1"/>
        <end position="270"/>
    </location>
</feature>
<feature type="binding site" evidence="1">
    <location>
        <position position="119"/>
    </location>
    <ligand>
        <name>S-adenosyl-L-methionine</name>
        <dbReference type="ChEBI" id="CHEBI:59789"/>
    </ligand>
</feature>
<feature type="binding site" evidence="1">
    <location>
        <begin position="139"/>
        <end position="144"/>
    </location>
    <ligand>
        <name>S-adenosyl-L-methionine</name>
        <dbReference type="ChEBI" id="CHEBI:59789"/>
    </ligand>
</feature>
<comment type="function">
    <text evidence="1">Specifically methylates guanosine-37 in various tRNAs.</text>
</comment>
<comment type="catalytic activity">
    <reaction evidence="1">
        <text>guanosine(37) in tRNA + S-adenosyl-L-methionine = N(1)-methylguanosine(37) in tRNA + S-adenosyl-L-homocysteine + H(+)</text>
        <dbReference type="Rhea" id="RHEA:36899"/>
        <dbReference type="Rhea" id="RHEA-COMP:10145"/>
        <dbReference type="Rhea" id="RHEA-COMP:10147"/>
        <dbReference type="ChEBI" id="CHEBI:15378"/>
        <dbReference type="ChEBI" id="CHEBI:57856"/>
        <dbReference type="ChEBI" id="CHEBI:59789"/>
        <dbReference type="ChEBI" id="CHEBI:73542"/>
        <dbReference type="ChEBI" id="CHEBI:74269"/>
        <dbReference type="EC" id="2.1.1.228"/>
    </reaction>
</comment>
<comment type="subunit">
    <text evidence="1">Homodimer.</text>
</comment>
<comment type="subcellular location">
    <subcellularLocation>
        <location evidence="1">Cytoplasm</location>
    </subcellularLocation>
</comment>
<comment type="similarity">
    <text evidence="1">Belongs to the RNA methyltransferase TrmD family.</text>
</comment>
<gene>
    <name evidence="1" type="primary">trmD</name>
    <name type="synonym">trmB</name>
    <name type="ordered locus">NE1673</name>
</gene>
<organism>
    <name type="scientific">Nitrosomonas europaea (strain ATCC 19718 / CIP 103999 / KCTC 2705 / NBRC 14298)</name>
    <dbReference type="NCBI Taxonomy" id="228410"/>
    <lineage>
        <taxon>Bacteria</taxon>
        <taxon>Pseudomonadati</taxon>
        <taxon>Pseudomonadota</taxon>
        <taxon>Betaproteobacteria</taxon>
        <taxon>Nitrosomonadales</taxon>
        <taxon>Nitrosomonadaceae</taxon>
        <taxon>Nitrosomonas</taxon>
    </lineage>
</organism>
<keyword id="KW-0963">Cytoplasm</keyword>
<keyword id="KW-0489">Methyltransferase</keyword>
<keyword id="KW-1185">Reference proteome</keyword>
<keyword id="KW-0949">S-adenosyl-L-methionine</keyword>
<keyword id="KW-0808">Transferase</keyword>
<keyword id="KW-0819">tRNA processing</keyword>
<evidence type="ECO:0000255" key="1">
    <source>
        <dbReference type="HAMAP-Rule" id="MF_00605"/>
    </source>
</evidence>
<dbReference type="EC" id="2.1.1.228" evidence="1"/>
<dbReference type="EMBL" id="AL954747">
    <property type="protein sequence ID" value="CAD85584.1"/>
    <property type="molecule type" value="Genomic_DNA"/>
</dbReference>
<dbReference type="RefSeq" id="WP_011112230.1">
    <property type="nucleotide sequence ID" value="NC_004757.1"/>
</dbReference>
<dbReference type="SMR" id="Q820K4"/>
<dbReference type="STRING" id="228410.NE1673"/>
<dbReference type="GeneID" id="87104837"/>
<dbReference type="KEGG" id="neu:NE1673"/>
<dbReference type="eggNOG" id="COG0336">
    <property type="taxonomic scope" value="Bacteria"/>
</dbReference>
<dbReference type="HOGENOM" id="CLU_047363_0_2_4"/>
<dbReference type="OrthoDB" id="9807416at2"/>
<dbReference type="PhylomeDB" id="Q820K4"/>
<dbReference type="Proteomes" id="UP000001416">
    <property type="component" value="Chromosome"/>
</dbReference>
<dbReference type="GO" id="GO:0005829">
    <property type="term" value="C:cytosol"/>
    <property type="evidence" value="ECO:0007669"/>
    <property type="project" value="TreeGrafter"/>
</dbReference>
<dbReference type="GO" id="GO:0052906">
    <property type="term" value="F:tRNA (guanine(37)-N1)-methyltransferase activity"/>
    <property type="evidence" value="ECO:0007669"/>
    <property type="project" value="UniProtKB-UniRule"/>
</dbReference>
<dbReference type="GO" id="GO:0002939">
    <property type="term" value="P:tRNA N1-guanine methylation"/>
    <property type="evidence" value="ECO:0007669"/>
    <property type="project" value="TreeGrafter"/>
</dbReference>
<dbReference type="CDD" id="cd18080">
    <property type="entry name" value="TrmD-like"/>
    <property type="match status" value="1"/>
</dbReference>
<dbReference type="FunFam" id="1.10.1270.20:FF:000001">
    <property type="entry name" value="tRNA (guanine-N(1)-)-methyltransferase"/>
    <property type="match status" value="1"/>
</dbReference>
<dbReference type="FunFam" id="3.40.1280.10:FF:000001">
    <property type="entry name" value="tRNA (guanine-N(1)-)-methyltransferase"/>
    <property type="match status" value="1"/>
</dbReference>
<dbReference type="Gene3D" id="3.40.1280.10">
    <property type="match status" value="1"/>
</dbReference>
<dbReference type="Gene3D" id="1.10.1270.20">
    <property type="entry name" value="tRNA(m1g37)methyltransferase, domain 2"/>
    <property type="match status" value="1"/>
</dbReference>
<dbReference type="HAMAP" id="MF_00605">
    <property type="entry name" value="TrmD"/>
    <property type="match status" value="1"/>
</dbReference>
<dbReference type="InterPro" id="IPR029028">
    <property type="entry name" value="Alpha/beta_knot_MTases"/>
</dbReference>
<dbReference type="InterPro" id="IPR023148">
    <property type="entry name" value="tRNA_m1G_MeTrfase_C_sf"/>
</dbReference>
<dbReference type="InterPro" id="IPR002649">
    <property type="entry name" value="tRNA_m1G_MeTrfase_TrmD"/>
</dbReference>
<dbReference type="InterPro" id="IPR029026">
    <property type="entry name" value="tRNA_m1G_MTases_N"/>
</dbReference>
<dbReference type="InterPro" id="IPR016009">
    <property type="entry name" value="tRNA_MeTrfase_TRMD/TRM10"/>
</dbReference>
<dbReference type="NCBIfam" id="NF000648">
    <property type="entry name" value="PRK00026.1"/>
    <property type="match status" value="1"/>
</dbReference>
<dbReference type="NCBIfam" id="TIGR00088">
    <property type="entry name" value="trmD"/>
    <property type="match status" value="1"/>
</dbReference>
<dbReference type="PANTHER" id="PTHR46417">
    <property type="entry name" value="TRNA (GUANINE-N(1)-)-METHYLTRANSFERASE"/>
    <property type="match status" value="1"/>
</dbReference>
<dbReference type="PANTHER" id="PTHR46417:SF1">
    <property type="entry name" value="TRNA (GUANINE-N(1)-)-METHYLTRANSFERASE"/>
    <property type="match status" value="1"/>
</dbReference>
<dbReference type="Pfam" id="PF01746">
    <property type="entry name" value="tRNA_m1G_MT"/>
    <property type="match status" value="1"/>
</dbReference>
<dbReference type="PIRSF" id="PIRSF000386">
    <property type="entry name" value="tRNA_mtase"/>
    <property type="match status" value="1"/>
</dbReference>
<dbReference type="SUPFAM" id="SSF75217">
    <property type="entry name" value="alpha/beta knot"/>
    <property type="match status" value="1"/>
</dbReference>
<accession>Q820K4</accession>
<proteinExistence type="inferred from homology"/>
<protein>
    <recommendedName>
        <fullName evidence="1">tRNA (guanine-N(1)-)-methyltransferase</fullName>
        <ecNumber evidence="1">2.1.1.228</ecNumber>
    </recommendedName>
    <alternativeName>
        <fullName evidence="1">M1G-methyltransferase</fullName>
    </alternativeName>
    <alternativeName>
        <fullName evidence="1">tRNA [GM37] methyltransferase</fullName>
    </alternativeName>
</protein>